<evidence type="ECO:0000255" key="1"/>
<evidence type="ECO:0000255" key="2">
    <source>
        <dbReference type="PROSITE-ProRule" id="PRU00532"/>
    </source>
</evidence>
<evidence type="ECO:0000255" key="3">
    <source>
        <dbReference type="PROSITE-ProRule" id="PRU10010"/>
    </source>
</evidence>
<evidence type="ECO:0000256" key="4">
    <source>
        <dbReference type="SAM" id="MobiDB-lite"/>
    </source>
</evidence>
<evidence type="ECO:0000269" key="5">
    <source>
    </source>
</evidence>
<evidence type="ECO:0000305" key="6"/>
<evidence type="ECO:0000305" key="7">
    <source>
    </source>
</evidence>
<accession>P31318</accession>
<comment type="catalytic activity">
    <reaction evidence="5">
        <text>N-acetyl-L-glutamate 5-semialdehyde + phosphate + NADP(+) = N-acetyl-L-glutamyl 5-phosphate + NADPH + H(+)</text>
        <dbReference type="Rhea" id="RHEA:21588"/>
        <dbReference type="ChEBI" id="CHEBI:15378"/>
        <dbReference type="ChEBI" id="CHEBI:29123"/>
        <dbReference type="ChEBI" id="CHEBI:43474"/>
        <dbReference type="ChEBI" id="CHEBI:57783"/>
        <dbReference type="ChEBI" id="CHEBI:57936"/>
        <dbReference type="ChEBI" id="CHEBI:58349"/>
        <dbReference type="EC" id="1.2.1.38"/>
    </reaction>
</comment>
<comment type="catalytic activity">
    <reaction evidence="5">
        <text>N-acetyl-L-glutamate + ATP = N-acetyl-L-glutamyl 5-phosphate + ADP</text>
        <dbReference type="Rhea" id="RHEA:14629"/>
        <dbReference type="ChEBI" id="CHEBI:30616"/>
        <dbReference type="ChEBI" id="CHEBI:44337"/>
        <dbReference type="ChEBI" id="CHEBI:57936"/>
        <dbReference type="ChEBI" id="CHEBI:456216"/>
        <dbReference type="EC" id="2.7.2.8"/>
    </reaction>
</comment>
<comment type="activity regulation">
    <text>The kinase activity is inhibited by arginine.</text>
</comment>
<comment type="pathway">
    <text evidence="7">Amino-acid biosynthesis; L-arginine biosynthesis; N(2)-acetyl-L-ornithine from L-glutamate: step 2/4.</text>
</comment>
<comment type="pathway">
    <text evidence="7">Amino-acid biosynthesis; L-arginine biosynthesis; N(2)-acetyl-L-ornithine from L-glutamate: step 3/4.</text>
</comment>
<comment type="subcellular location">
    <subcellularLocation>
        <location evidence="7">Mitochondrion</location>
    </subcellularLocation>
</comment>
<comment type="PTM">
    <text evidence="7">The protein precursor is probably cleaved into the two biologically active enzymes, the kinase and the reductase.</text>
</comment>
<comment type="similarity">
    <text evidence="6">In the N-terminal section; belongs to the acetylglutamate kinase family.</text>
</comment>
<comment type="similarity">
    <text evidence="6">In the C-terminal section; belongs to the NAGSA dehydrogenase family.</text>
</comment>
<keyword id="KW-0028">Amino-acid biosynthesis</keyword>
<keyword id="KW-0055">Arginine biosynthesis</keyword>
<keyword id="KW-0067">ATP-binding</keyword>
<keyword id="KW-0165">Cleavage on pair of basic residues</keyword>
<keyword id="KW-0418">Kinase</keyword>
<keyword id="KW-0496">Mitochondrion</keyword>
<keyword id="KW-0511">Multifunctional enzyme</keyword>
<keyword id="KW-0521">NADP</keyword>
<keyword id="KW-0547">Nucleotide-binding</keyword>
<keyword id="KW-0560">Oxidoreductase</keyword>
<keyword id="KW-1185">Reference proteome</keyword>
<keyword id="KW-0808">Transferase</keyword>
<keyword id="KW-0809">Transit peptide</keyword>
<feature type="transit peptide" description="Mitochondrion" evidence="1">
    <location>
        <begin position="1"/>
        <end position="59"/>
    </location>
</feature>
<feature type="chain" id="PRO_0000002071" description="Acetylglutamate kinase" evidence="1">
    <location>
        <begin position="60"/>
        <end position="550"/>
    </location>
</feature>
<feature type="chain" id="PRO_0000002072" description="N-acetyl-gamma-glutamyl-phosphate reductase" evidence="1">
    <location>
        <begin position="551"/>
        <end position="885"/>
    </location>
</feature>
<feature type="domain" description="N-acetyltransferase" evidence="2">
    <location>
        <begin position="346"/>
        <end position="499"/>
    </location>
</feature>
<feature type="region of interest" description="Disordered" evidence="4">
    <location>
        <begin position="503"/>
        <end position="532"/>
    </location>
</feature>
<feature type="compositionally biased region" description="Low complexity" evidence="4">
    <location>
        <begin position="503"/>
        <end position="523"/>
    </location>
</feature>
<feature type="active site" evidence="3">
    <location>
        <position position="703"/>
    </location>
</feature>
<feature type="sequence variant" description="In strain: 975.">
    <original>V</original>
    <variation>D</variation>
    <location>
        <position position="261"/>
    </location>
</feature>
<feature type="sequence variant" description="In strain: 975.">
    <original>G</original>
    <variation>P</variation>
    <location>
        <position position="345"/>
    </location>
</feature>
<proteinExistence type="evidence at protein level"/>
<dbReference type="EC" id="1.2.1.38" evidence="5"/>
<dbReference type="EC" id="2.7.2.8" evidence="5"/>
<dbReference type="EMBL" id="X63576">
    <property type="protein sequence ID" value="CAA45132.1"/>
    <property type="molecule type" value="Genomic_DNA"/>
</dbReference>
<dbReference type="EMBL" id="CU329670">
    <property type="protein sequence ID" value="CAA93559.1"/>
    <property type="molecule type" value="Genomic_DNA"/>
</dbReference>
<dbReference type="PIR" id="S22389">
    <property type="entry name" value="S22389"/>
</dbReference>
<dbReference type="RefSeq" id="NP_593691.1">
    <property type="nucleotide sequence ID" value="NM_001019123.2"/>
</dbReference>
<dbReference type="SMR" id="P31318"/>
<dbReference type="BioGRID" id="279813">
    <property type="interactions" value="47"/>
</dbReference>
<dbReference type="FunCoup" id="P31318">
    <property type="interactions" value="157"/>
</dbReference>
<dbReference type="STRING" id="284812.P31318"/>
<dbReference type="iPTMnet" id="P31318"/>
<dbReference type="PaxDb" id="4896-SPAC4G9.09c.1"/>
<dbReference type="EnsemblFungi" id="SPAC4G9.09c.1">
    <property type="protein sequence ID" value="SPAC4G9.09c.1:pep"/>
    <property type="gene ID" value="SPAC4G9.09c"/>
</dbReference>
<dbReference type="GeneID" id="2543391"/>
<dbReference type="KEGG" id="spo:2543391"/>
<dbReference type="PomBase" id="SPAC4G9.09c">
    <property type="gene designation" value="arg11"/>
</dbReference>
<dbReference type="VEuPathDB" id="FungiDB:SPAC4G9.09c"/>
<dbReference type="eggNOG" id="KOG2436">
    <property type="taxonomic scope" value="Eukaryota"/>
</dbReference>
<dbReference type="eggNOG" id="KOG4354">
    <property type="taxonomic scope" value="Eukaryota"/>
</dbReference>
<dbReference type="HOGENOM" id="CLU_006384_4_0_1"/>
<dbReference type="InParanoid" id="P31318"/>
<dbReference type="OMA" id="IAFIPHV"/>
<dbReference type="PhylomeDB" id="P31318"/>
<dbReference type="Reactome" id="R-SPO-70635">
    <property type="pathway name" value="Urea cycle"/>
</dbReference>
<dbReference type="UniPathway" id="UPA00068">
    <property type="reaction ID" value="UER00107"/>
</dbReference>
<dbReference type="UniPathway" id="UPA00068">
    <property type="reaction ID" value="UER00108"/>
</dbReference>
<dbReference type="PRO" id="PR:P31318"/>
<dbReference type="Proteomes" id="UP000002485">
    <property type="component" value="Chromosome I"/>
</dbReference>
<dbReference type="GO" id="GO:0005759">
    <property type="term" value="C:mitochondrial matrix"/>
    <property type="evidence" value="ECO:0000314"/>
    <property type="project" value="PomBase"/>
</dbReference>
<dbReference type="GO" id="GO:0005739">
    <property type="term" value="C:mitochondrion"/>
    <property type="evidence" value="ECO:0007005"/>
    <property type="project" value="PomBase"/>
</dbReference>
<dbReference type="GO" id="GO:0003991">
    <property type="term" value="F:acetylglutamate kinase activity"/>
    <property type="evidence" value="ECO:0000318"/>
    <property type="project" value="GO_Central"/>
</dbReference>
<dbReference type="GO" id="GO:0005524">
    <property type="term" value="F:ATP binding"/>
    <property type="evidence" value="ECO:0007669"/>
    <property type="project" value="UniProtKB-KW"/>
</dbReference>
<dbReference type="GO" id="GO:0003942">
    <property type="term" value="F:N-acetyl-gamma-glutamyl-phosphate reductase activity"/>
    <property type="evidence" value="ECO:0000315"/>
    <property type="project" value="PomBase"/>
</dbReference>
<dbReference type="GO" id="GO:0051287">
    <property type="term" value="F:NAD binding"/>
    <property type="evidence" value="ECO:0007669"/>
    <property type="project" value="InterPro"/>
</dbReference>
<dbReference type="GO" id="GO:0070401">
    <property type="term" value="F:NADP+ binding"/>
    <property type="evidence" value="ECO:0007669"/>
    <property type="project" value="InterPro"/>
</dbReference>
<dbReference type="GO" id="GO:0042450">
    <property type="term" value="P:arginine biosynthetic process via ornithine"/>
    <property type="evidence" value="ECO:0000315"/>
    <property type="project" value="PomBase"/>
</dbReference>
<dbReference type="GO" id="GO:0006526">
    <property type="term" value="P:L-arginine biosynthetic process"/>
    <property type="evidence" value="ECO:0000318"/>
    <property type="project" value="GO_Central"/>
</dbReference>
<dbReference type="CDD" id="cd04252">
    <property type="entry name" value="AAK_NAGK-fArgBP"/>
    <property type="match status" value="1"/>
</dbReference>
<dbReference type="CDD" id="cd23936">
    <property type="entry name" value="AGPR_C_ARG5_6_like"/>
    <property type="match status" value="1"/>
</dbReference>
<dbReference type="CDD" id="cd24149">
    <property type="entry name" value="AGPR_N_ARG5_6_like"/>
    <property type="match status" value="1"/>
</dbReference>
<dbReference type="CDD" id="cd03173">
    <property type="entry name" value="DUF619-like"/>
    <property type="match status" value="1"/>
</dbReference>
<dbReference type="FunFam" id="3.30.360.10:FF:000019">
    <property type="entry name" value="Bifunctional acetylglutamate kinase/N-acetyl-gamma-glutamyl-phosphate reductase"/>
    <property type="match status" value="1"/>
</dbReference>
<dbReference type="FunFam" id="3.40.630.30:FF:000029">
    <property type="entry name" value="Bifunctional acetylglutamate kinase/N-acetyl-gamma-glutamyl-phosphate reductase"/>
    <property type="match status" value="1"/>
</dbReference>
<dbReference type="FunFam" id="3.40.1160.10:FF:000011">
    <property type="entry name" value="N-acetyl-gamma-glutamyl-phosphate reductase, variant"/>
    <property type="match status" value="1"/>
</dbReference>
<dbReference type="Gene3D" id="3.40.630.30">
    <property type="match status" value="1"/>
</dbReference>
<dbReference type="Gene3D" id="3.40.1160.10">
    <property type="entry name" value="Acetylglutamate kinase-like"/>
    <property type="match status" value="1"/>
</dbReference>
<dbReference type="Gene3D" id="3.30.360.10">
    <property type="entry name" value="Dihydrodipicolinate Reductase, domain 2"/>
    <property type="match status" value="1"/>
</dbReference>
<dbReference type="Gene3D" id="3.40.50.720">
    <property type="entry name" value="NAD(P)-binding Rossmann-like Domain"/>
    <property type="match status" value="1"/>
</dbReference>
<dbReference type="HAMAP" id="MF_00150">
    <property type="entry name" value="ArgC_type1"/>
    <property type="match status" value="1"/>
</dbReference>
<dbReference type="InterPro" id="IPR036393">
    <property type="entry name" value="AceGlu_kinase-like_sf"/>
</dbReference>
<dbReference type="InterPro" id="IPR004662">
    <property type="entry name" value="AcgluKinase_fam"/>
</dbReference>
<dbReference type="InterPro" id="IPR023013">
    <property type="entry name" value="AGPR_AS"/>
</dbReference>
<dbReference type="InterPro" id="IPR000706">
    <property type="entry name" value="AGPR_type-1"/>
</dbReference>
<dbReference type="InterPro" id="IPR001048">
    <property type="entry name" value="Asp/Glu/Uridylate_kinase"/>
</dbReference>
<dbReference type="InterPro" id="IPR036291">
    <property type="entry name" value="NAD(P)-bd_dom_sf"/>
</dbReference>
<dbReference type="InterPro" id="IPR041734">
    <property type="entry name" value="NAGK-fArgBP"/>
</dbReference>
<dbReference type="InterPro" id="IPR011241">
    <property type="entry name" value="NAGK/NAGSA"/>
</dbReference>
<dbReference type="InterPro" id="IPR000534">
    <property type="entry name" value="Semialdehyde_DH_NAD-bd"/>
</dbReference>
<dbReference type="InterPro" id="IPR006855">
    <property type="entry name" value="Vertebrate-like_GNAT_dom"/>
</dbReference>
<dbReference type="NCBIfam" id="TIGR00761">
    <property type="entry name" value="argB"/>
    <property type="match status" value="1"/>
</dbReference>
<dbReference type="NCBIfam" id="TIGR01850">
    <property type="entry name" value="argC"/>
    <property type="match status" value="1"/>
</dbReference>
<dbReference type="PANTHER" id="PTHR23342">
    <property type="entry name" value="N-ACETYLGLUTAMATE SYNTHASE"/>
    <property type="match status" value="1"/>
</dbReference>
<dbReference type="PANTHER" id="PTHR23342:SF0">
    <property type="entry name" value="N-ACETYLGLUTAMATE SYNTHASE, MITOCHONDRIAL"/>
    <property type="match status" value="1"/>
</dbReference>
<dbReference type="Pfam" id="PF00696">
    <property type="entry name" value="AA_kinase"/>
    <property type="match status" value="1"/>
</dbReference>
<dbReference type="Pfam" id="PF04768">
    <property type="entry name" value="NAT"/>
    <property type="match status" value="1"/>
</dbReference>
<dbReference type="Pfam" id="PF01118">
    <property type="entry name" value="Semialdhyde_dh"/>
    <property type="match status" value="1"/>
</dbReference>
<dbReference type="Pfam" id="PF22698">
    <property type="entry name" value="Semialdhyde_dhC_1"/>
    <property type="match status" value="1"/>
</dbReference>
<dbReference type="PIRSF" id="PIRSF036440">
    <property type="entry name" value="ARG5-6"/>
    <property type="match status" value="1"/>
</dbReference>
<dbReference type="SMART" id="SM00859">
    <property type="entry name" value="Semialdhyde_dh"/>
    <property type="match status" value="1"/>
</dbReference>
<dbReference type="SUPFAM" id="SSF53633">
    <property type="entry name" value="Carbamate kinase-like"/>
    <property type="match status" value="1"/>
</dbReference>
<dbReference type="SUPFAM" id="SSF55347">
    <property type="entry name" value="Glyceraldehyde-3-phosphate dehydrogenase-like, C-terminal domain"/>
    <property type="match status" value="1"/>
</dbReference>
<dbReference type="SUPFAM" id="SSF51735">
    <property type="entry name" value="NAD(P)-binding Rossmann-fold domains"/>
    <property type="match status" value="1"/>
</dbReference>
<dbReference type="PROSITE" id="PS01224">
    <property type="entry name" value="ARGC"/>
    <property type="match status" value="1"/>
</dbReference>
<dbReference type="PROSITE" id="PS51731">
    <property type="entry name" value="GNAT_NAGS"/>
    <property type="match status" value="1"/>
</dbReference>
<reference key="1">
    <citation type="journal article" date="1992" name="Eur. J. Biochem.">
        <title>Cloning and sequencing of arg3 and arg11 genes of Schizosaccharomyces pombe on a 10-kb DNA fragment. Heterologous expression and mitochondrial targeting of their translation products.</title>
        <authorList>
            <person name="van Huffel C."/>
            <person name="Dubois E."/>
            <person name="Messenguy F."/>
        </authorList>
    </citation>
    <scope>NUCLEOTIDE SEQUENCE [GENOMIC DNA]</scope>
    <scope>CATALYTIC ACTIVITY</scope>
    <scope>PATHWAY</scope>
    <scope>SUBCELLULAR LOCATION</scope>
    <scope>PROTEOLYTIC PROCESSING</scope>
    <source>
        <strain>ATCC 38365 / 975</strain>
    </source>
</reference>
<reference key="2">
    <citation type="journal article" date="2002" name="Nature">
        <title>The genome sequence of Schizosaccharomyces pombe.</title>
        <authorList>
            <person name="Wood V."/>
            <person name="Gwilliam R."/>
            <person name="Rajandream M.A."/>
            <person name="Lyne M.H."/>
            <person name="Lyne R."/>
            <person name="Stewart A."/>
            <person name="Sgouros J.G."/>
            <person name="Peat N."/>
            <person name="Hayles J."/>
            <person name="Baker S.G."/>
            <person name="Basham D."/>
            <person name="Bowman S."/>
            <person name="Brooks K."/>
            <person name="Brown D."/>
            <person name="Brown S."/>
            <person name="Chillingworth T."/>
            <person name="Churcher C.M."/>
            <person name="Collins M."/>
            <person name="Connor R."/>
            <person name="Cronin A."/>
            <person name="Davis P."/>
            <person name="Feltwell T."/>
            <person name="Fraser A."/>
            <person name="Gentles S."/>
            <person name="Goble A."/>
            <person name="Hamlin N."/>
            <person name="Harris D.E."/>
            <person name="Hidalgo J."/>
            <person name="Hodgson G."/>
            <person name="Holroyd S."/>
            <person name="Hornsby T."/>
            <person name="Howarth S."/>
            <person name="Huckle E.J."/>
            <person name="Hunt S."/>
            <person name="Jagels K."/>
            <person name="James K.D."/>
            <person name="Jones L."/>
            <person name="Jones M."/>
            <person name="Leather S."/>
            <person name="McDonald S."/>
            <person name="McLean J."/>
            <person name="Mooney P."/>
            <person name="Moule S."/>
            <person name="Mungall K.L."/>
            <person name="Murphy L.D."/>
            <person name="Niblett D."/>
            <person name="Odell C."/>
            <person name="Oliver K."/>
            <person name="O'Neil S."/>
            <person name="Pearson D."/>
            <person name="Quail M.A."/>
            <person name="Rabbinowitsch E."/>
            <person name="Rutherford K.M."/>
            <person name="Rutter S."/>
            <person name="Saunders D."/>
            <person name="Seeger K."/>
            <person name="Sharp S."/>
            <person name="Skelton J."/>
            <person name="Simmonds M.N."/>
            <person name="Squares R."/>
            <person name="Squares S."/>
            <person name="Stevens K."/>
            <person name="Taylor K."/>
            <person name="Taylor R.G."/>
            <person name="Tivey A."/>
            <person name="Walsh S.V."/>
            <person name="Warren T."/>
            <person name="Whitehead S."/>
            <person name="Woodward J.R."/>
            <person name="Volckaert G."/>
            <person name="Aert R."/>
            <person name="Robben J."/>
            <person name="Grymonprez B."/>
            <person name="Weltjens I."/>
            <person name="Vanstreels E."/>
            <person name="Rieger M."/>
            <person name="Schaefer M."/>
            <person name="Mueller-Auer S."/>
            <person name="Gabel C."/>
            <person name="Fuchs M."/>
            <person name="Duesterhoeft A."/>
            <person name="Fritzc C."/>
            <person name="Holzer E."/>
            <person name="Moestl D."/>
            <person name="Hilbert H."/>
            <person name="Borzym K."/>
            <person name="Langer I."/>
            <person name="Beck A."/>
            <person name="Lehrach H."/>
            <person name="Reinhardt R."/>
            <person name="Pohl T.M."/>
            <person name="Eger P."/>
            <person name="Zimmermann W."/>
            <person name="Wedler H."/>
            <person name="Wambutt R."/>
            <person name="Purnelle B."/>
            <person name="Goffeau A."/>
            <person name="Cadieu E."/>
            <person name="Dreano S."/>
            <person name="Gloux S."/>
            <person name="Lelaure V."/>
            <person name="Mottier S."/>
            <person name="Galibert F."/>
            <person name="Aves S.J."/>
            <person name="Xiang Z."/>
            <person name="Hunt C."/>
            <person name="Moore K."/>
            <person name="Hurst S.M."/>
            <person name="Lucas M."/>
            <person name="Rochet M."/>
            <person name="Gaillardin C."/>
            <person name="Tallada V.A."/>
            <person name="Garzon A."/>
            <person name="Thode G."/>
            <person name="Daga R.R."/>
            <person name="Cruzado L."/>
            <person name="Jimenez J."/>
            <person name="Sanchez M."/>
            <person name="del Rey F."/>
            <person name="Benito J."/>
            <person name="Dominguez A."/>
            <person name="Revuelta J.L."/>
            <person name="Moreno S."/>
            <person name="Armstrong J."/>
            <person name="Forsburg S.L."/>
            <person name="Cerutti L."/>
            <person name="Lowe T."/>
            <person name="McCombie W.R."/>
            <person name="Paulsen I."/>
            <person name="Potashkin J."/>
            <person name="Shpakovski G.V."/>
            <person name="Ussery D."/>
            <person name="Barrell B.G."/>
            <person name="Nurse P."/>
        </authorList>
    </citation>
    <scope>NUCLEOTIDE SEQUENCE [LARGE SCALE GENOMIC DNA]</scope>
    <source>
        <strain>972 / ATCC 24843</strain>
    </source>
</reference>
<gene>
    <name type="primary">arg11</name>
    <name type="ORF">SPAC4G9.09c</name>
</gene>
<name>ARG56_SCHPO</name>
<sequence>MLIELQQIVKSGLVRNGAKHCTKRSLLCSNASVIASKRFQGSFAPGQQQPLNPLAKPIEQDRDAIIRILSSIGSRREVEQYLRYFTSFEAQRFAIIKVGGAIITDELDTLAQSLAFLNHVGLYPIVVHGAGPQLNKILASRNVEPEYSDGIRITDAETLSVARKVFLEENAKLVDALEKLGTRARPITGGVFQAEYLDKEKYKYVGKIVKVNKAPIEHSIRAGTLPILTSMAETASGQLLNVNADITAGELARVLKPLKVVYLNEKGGLINGETKKKISSIYLDREYDGLMKQPWVKYGTKLKIKEIKELLDTLPRTSSVAIISTKDLQKELFTESGAGTLISRGFVINKHDSLDSIPDAALENLIIQKNSLAAPSESLKQFKDTLKDRKLRIYSDSFNESVAIVDTTDSSLPVLLAFGAADNNWLNNVVDSILTTLKADFPSLLWRLQPSAKNLEWFFSKSEGTLFANNFYYFWYGVKDLNKISKFIQSDKPFADAIIQTQSTKPPTASSTTNNPSSSQINQKRSYSTSSLFSKNKKMNRSLFLKGGKRFFSAEAQKTQKPLKAVSSKPAKVVLLGARGYTGKNLIGLINTHPYLELSHVSSRELEGTKLPGYTKKEIQYVNLSTDDVKKLEEEGAVDAWVMALPNGVCKPYVDALTSANGKSVIVDLSADYRFEPSWQYGLPELNDREALRNSKRISNPGCYATGSQVGLTPILSLIDGQPSIFGVSGYSGAGTKPSPKNDLNVLTNNLIPYSLTDHIHEREISYRLKQPVAFIPHVAQWFQGITLTINVPLKKSITSRELRNLYQDRYNGEPLIHVQGDVPLVKDNAHKHHVSVGGFGVHSSGKRAVIVVTIDNLLKGAATQALQNLNLSCGYDEYAGIHLD</sequence>
<organism>
    <name type="scientific">Schizosaccharomyces pombe (strain 972 / ATCC 24843)</name>
    <name type="common">Fission yeast</name>
    <dbReference type="NCBI Taxonomy" id="284812"/>
    <lineage>
        <taxon>Eukaryota</taxon>
        <taxon>Fungi</taxon>
        <taxon>Dikarya</taxon>
        <taxon>Ascomycota</taxon>
        <taxon>Taphrinomycotina</taxon>
        <taxon>Schizosaccharomycetes</taxon>
        <taxon>Schizosaccharomycetales</taxon>
        <taxon>Schizosaccharomycetaceae</taxon>
        <taxon>Schizosaccharomyces</taxon>
    </lineage>
</organism>
<protein>
    <recommendedName>
        <fullName>Protein arg11, mitochondrial</fullName>
    </recommendedName>
    <component>
        <recommendedName>
            <fullName>N-acetyl-gamma-glutamyl-phosphate reductase</fullName>
            <ecNumber evidence="5">1.2.1.38</ecNumber>
        </recommendedName>
        <alternativeName>
            <fullName>N-acetyl-glutamate semialdehyde dehydrogenase</fullName>
            <shortName>NAGSA dehydrogenase</shortName>
        </alternativeName>
    </component>
    <component>
        <recommendedName>
            <fullName>Acetylglutamate kinase</fullName>
            <ecNumber evidence="5">2.7.2.8</ecNumber>
        </recommendedName>
        <alternativeName>
            <fullName>N-acetyl-L-glutamate 5-phosphotransferase</fullName>
        </alternativeName>
        <alternativeName>
            <fullName>NAG kinase</fullName>
            <shortName>AGK</shortName>
        </alternativeName>
    </component>
</protein>